<gene>
    <name type="primary">rabL</name>
    <name type="ORF">DDB_G0290779</name>
</gene>
<evidence type="ECO:0000250" key="1"/>
<evidence type="ECO:0000305" key="2"/>
<feature type="chain" id="PRO_0000332760" description="Ras-related protein RabL">
    <location>
        <begin position="1"/>
        <end position="204"/>
    </location>
</feature>
<feature type="short sequence motif" description="Effector region" evidence="1">
    <location>
        <begin position="36"/>
        <end position="44"/>
    </location>
</feature>
<feature type="binding site" evidence="1">
    <location>
        <begin position="14"/>
        <end position="21"/>
    </location>
    <ligand>
        <name>GTP</name>
        <dbReference type="ChEBI" id="CHEBI:37565"/>
    </ligand>
</feature>
<feature type="binding site" evidence="1">
    <location>
        <begin position="62"/>
        <end position="66"/>
    </location>
    <ligand>
        <name>GTP</name>
        <dbReference type="ChEBI" id="CHEBI:37565"/>
    </ligand>
</feature>
<feature type="binding site" evidence="1">
    <location>
        <begin position="120"/>
        <end position="123"/>
    </location>
    <ligand>
        <name>GTP</name>
        <dbReference type="ChEBI" id="CHEBI:37565"/>
    </ligand>
</feature>
<feature type="lipid moiety-binding region" description="S-geranylgeranyl cysteine" evidence="1">
    <location>
        <position position="203"/>
    </location>
</feature>
<feature type="lipid moiety-binding region" description="S-geranylgeranyl cysteine" evidence="1">
    <location>
        <position position="204"/>
    </location>
</feature>
<keyword id="KW-1003">Cell membrane</keyword>
<keyword id="KW-0342">GTP-binding</keyword>
<keyword id="KW-0449">Lipoprotein</keyword>
<keyword id="KW-0472">Membrane</keyword>
<keyword id="KW-0547">Nucleotide-binding</keyword>
<keyword id="KW-0636">Prenylation</keyword>
<keyword id="KW-1185">Reference proteome</keyword>
<proteinExistence type="inferred from homology"/>
<sequence length="204" mass="23619">MKEEKTMLKIITLGDSNVGKTSLFYHYVNGEYRYNRPPSIGPDYFIKELKVENKHVFLMVWDTCGQERFQAFSPPYFRGANCYTLCFDIHNEESFINLGKWMDEIIKYCYGNIPFVLVGTKSDIPRTDKSISKARIEQWCKNIEDQGIIDKVHYFETSAKLSQNVTELYNVAAKLALEHYSIVKYISIIRPIGPPEEVKVGTCC</sequence>
<name>RABL_DICDI</name>
<protein>
    <recommendedName>
        <fullName>Ras-related protein RabL</fullName>
    </recommendedName>
</protein>
<accession>Q54FK7</accession>
<organism>
    <name type="scientific">Dictyostelium discoideum</name>
    <name type="common">Social amoeba</name>
    <dbReference type="NCBI Taxonomy" id="44689"/>
    <lineage>
        <taxon>Eukaryota</taxon>
        <taxon>Amoebozoa</taxon>
        <taxon>Evosea</taxon>
        <taxon>Eumycetozoa</taxon>
        <taxon>Dictyostelia</taxon>
        <taxon>Dictyosteliales</taxon>
        <taxon>Dictyosteliaceae</taxon>
        <taxon>Dictyostelium</taxon>
    </lineage>
</organism>
<dbReference type="EMBL" id="AAFI02000171">
    <property type="protein sequence ID" value="EAL62023.1"/>
    <property type="molecule type" value="Genomic_DNA"/>
</dbReference>
<dbReference type="RefSeq" id="XP_635533.1">
    <property type="nucleotide sequence ID" value="XM_630441.1"/>
</dbReference>
<dbReference type="SMR" id="Q54FK7"/>
<dbReference type="FunCoup" id="Q54FK7">
    <property type="interactions" value="5"/>
</dbReference>
<dbReference type="STRING" id="44689.Q54FK7"/>
<dbReference type="PaxDb" id="44689-DDB0191360"/>
<dbReference type="EnsemblProtists" id="EAL62023">
    <property type="protein sequence ID" value="EAL62023"/>
    <property type="gene ID" value="DDB_G0290779"/>
</dbReference>
<dbReference type="GeneID" id="8627830"/>
<dbReference type="KEGG" id="ddi:DDB_G0290779"/>
<dbReference type="dictyBase" id="DDB_G0290779">
    <property type="gene designation" value="rabL"/>
</dbReference>
<dbReference type="VEuPathDB" id="AmoebaDB:DDB_G0290779"/>
<dbReference type="eggNOG" id="KOG0394">
    <property type="taxonomic scope" value="Eukaryota"/>
</dbReference>
<dbReference type="HOGENOM" id="CLU_041217_10_6_1"/>
<dbReference type="InParanoid" id="Q54FK7"/>
<dbReference type="PhylomeDB" id="Q54FK7"/>
<dbReference type="Reactome" id="R-DDI-6798695">
    <property type="pathway name" value="Neutrophil degranulation"/>
</dbReference>
<dbReference type="Reactome" id="R-DDI-8854214">
    <property type="pathway name" value="TBC/RABGAPs"/>
</dbReference>
<dbReference type="Reactome" id="R-DDI-8873719">
    <property type="pathway name" value="RAB geranylgeranylation"/>
</dbReference>
<dbReference type="Reactome" id="R-DDI-8876198">
    <property type="pathway name" value="RAB GEFs exchange GTP for GDP on RABs"/>
</dbReference>
<dbReference type="Reactome" id="R-DDI-9706019">
    <property type="pathway name" value="RHOBTB3 ATPase cycle"/>
</dbReference>
<dbReference type="PRO" id="PR:Q54FK7"/>
<dbReference type="Proteomes" id="UP000002195">
    <property type="component" value="Chromosome 5"/>
</dbReference>
<dbReference type="GO" id="GO:0005770">
    <property type="term" value="C:late endosome"/>
    <property type="evidence" value="ECO:0000318"/>
    <property type="project" value="GO_Central"/>
</dbReference>
<dbReference type="GO" id="GO:0005764">
    <property type="term" value="C:lysosome"/>
    <property type="evidence" value="ECO:0000318"/>
    <property type="project" value="GO_Central"/>
</dbReference>
<dbReference type="GO" id="GO:0045335">
    <property type="term" value="C:phagocytic vesicle"/>
    <property type="evidence" value="ECO:0000318"/>
    <property type="project" value="GO_Central"/>
</dbReference>
<dbReference type="GO" id="GO:0005886">
    <property type="term" value="C:plasma membrane"/>
    <property type="evidence" value="ECO:0007669"/>
    <property type="project" value="UniProtKB-SubCell"/>
</dbReference>
<dbReference type="GO" id="GO:0005525">
    <property type="term" value="F:GTP binding"/>
    <property type="evidence" value="ECO:0007669"/>
    <property type="project" value="UniProtKB-KW"/>
</dbReference>
<dbReference type="GO" id="GO:0003924">
    <property type="term" value="F:GTPase activity"/>
    <property type="evidence" value="ECO:0007669"/>
    <property type="project" value="InterPro"/>
</dbReference>
<dbReference type="GO" id="GO:0006971">
    <property type="term" value="P:hypotonic response"/>
    <property type="evidence" value="ECO:0007007"/>
    <property type="project" value="dictyBase"/>
</dbReference>
<dbReference type="GO" id="GO:0090385">
    <property type="term" value="P:phagosome-lysosome fusion"/>
    <property type="evidence" value="ECO:0000318"/>
    <property type="project" value="GO_Central"/>
</dbReference>
<dbReference type="CDD" id="cd00154">
    <property type="entry name" value="Rab"/>
    <property type="match status" value="1"/>
</dbReference>
<dbReference type="FunFam" id="3.40.50.300:FF:003048">
    <property type="entry name" value="Ras-related protein RabN2"/>
    <property type="match status" value="1"/>
</dbReference>
<dbReference type="Gene3D" id="3.40.50.300">
    <property type="entry name" value="P-loop containing nucleotide triphosphate hydrolases"/>
    <property type="match status" value="1"/>
</dbReference>
<dbReference type="InterPro" id="IPR027417">
    <property type="entry name" value="P-loop_NTPase"/>
</dbReference>
<dbReference type="InterPro" id="IPR005225">
    <property type="entry name" value="Small_GTP-bd"/>
</dbReference>
<dbReference type="InterPro" id="IPR001806">
    <property type="entry name" value="Small_GTPase"/>
</dbReference>
<dbReference type="NCBIfam" id="TIGR00231">
    <property type="entry name" value="small_GTP"/>
    <property type="match status" value="1"/>
</dbReference>
<dbReference type="PANTHER" id="PTHR47981">
    <property type="entry name" value="RAB FAMILY"/>
    <property type="match status" value="1"/>
</dbReference>
<dbReference type="PANTHER" id="PTHR47981:SF20">
    <property type="entry name" value="RAS-RELATED PROTEIN RAB-7A"/>
    <property type="match status" value="1"/>
</dbReference>
<dbReference type="Pfam" id="PF00071">
    <property type="entry name" value="Ras"/>
    <property type="match status" value="1"/>
</dbReference>
<dbReference type="PRINTS" id="PR00449">
    <property type="entry name" value="RASTRNSFRMNG"/>
</dbReference>
<dbReference type="SMART" id="SM00175">
    <property type="entry name" value="RAB"/>
    <property type="match status" value="1"/>
</dbReference>
<dbReference type="SMART" id="SM00173">
    <property type="entry name" value="RAS"/>
    <property type="match status" value="1"/>
</dbReference>
<dbReference type="SMART" id="SM00174">
    <property type="entry name" value="RHO"/>
    <property type="match status" value="1"/>
</dbReference>
<dbReference type="SUPFAM" id="SSF52540">
    <property type="entry name" value="P-loop containing nucleoside triphosphate hydrolases"/>
    <property type="match status" value="1"/>
</dbReference>
<dbReference type="PROSITE" id="PS51419">
    <property type="entry name" value="RAB"/>
    <property type="match status" value="1"/>
</dbReference>
<reference key="1">
    <citation type="journal article" date="2005" name="Nature">
        <title>The genome of the social amoeba Dictyostelium discoideum.</title>
        <authorList>
            <person name="Eichinger L."/>
            <person name="Pachebat J.A."/>
            <person name="Gloeckner G."/>
            <person name="Rajandream M.A."/>
            <person name="Sucgang R."/>
            <person name="Berriman M."/>
            <person name="Song J."/>
            <person name="Olsen R."/>
            <person name="Szafranski K."/>
            <person name="Xu Q."/>
            <person name="Tunggal B."/>
            <person name="Kummerfeld S."/>
            <person name="Madera M."/>
            <person name="Konfortov B.A."/>
            <person name="Rivero F."/>
            <person name="Bankier A.T."/>
            <person name="Lehmann R."/>
            <person name="Hamlin N."/>
            <person name="Davies R."/>
            <person name="Gaudet P."/>
            <person name="Fey P."/>
            <person name="Pilcher K."/>
            <person name="Chen G."/>
            <person name="Saunders D."/>
            <person name="Sodergren E.J."/>
            <person name="Davis P."/>
            <person name="Kerhornou A."/>
            <person name="Nie X."/>
            <person name="Hall N."/>
            <person name="Anjard C."/>
            <person name="Hemphill L."/>
            <person name="Bason N."/>
            <person name="Farbrother P."/>
            <person name="Desany B."/>
            <person name="Just E."/>
            <person name="Morio T."/>
            <person name="Rost R."/>
            <person name="Churcher C.M."/>
            <person name="Cooper J."/>
            <person name="Haydock S."/>
            <person name="van Driessche N."/>
            <person name="Cronin A."/>
            <person name="Goodhead I."/>
            <person name="Muzny D.M."/>
            <person name="Mourier T."/>
            <person name="Pain A."/>
            <person name="Lu M."/>
            <person name="Harper D."/>
            <person name="Lindsay R."/>
            <person name="Hauser H."/>
            <person name="James K.D."/>
            <person name="Quiles M."/>
            <person name="Madan Babu M."/>
            <person name="Saito T."/>
            <person name="Buchrieser C."/>
            <person name="Wardroper A."/>
            <person name="Felder M."/>
            <person name="Thangavelu M."/>
            <person name="Johnson D."/>
            <person name="Knights A."/>
            <person name="Loulseged H."/>
            <person name="Mungall K.L."/>
            <person name="Oliver K."/>
            <person name="Price C."/>
            <person name="Quail M.A."/>
            <person name="Urushihara H."/>
            <person name="Hernandez J."/>
            <person name="Rabbinowitsch E."/>
            <person name="Steffen D."/>
            <person name="Sanders M."/>
            <person name="Ma J."/>
            <person name="Kohara Y."/>
            <person name="Sharp S."/>
            <person name="Simmonds M.N."/>
            <person name="Spiegler S."/>
            <person name="Tivey A."/>
            <person name="Sugano S."/>
            <person name="White B."/>
            <person name="Walker D."/>
            <person name="Woodward J.R."/>
            <person name="Winckler T."/>
            <person name="Tanaka Y."/>
            <person name="Shaulsky G."/>
            <person name="Schleicher M."/>
            <person name="Weinstock G.M."/>
            <person name="Rosenthal A."/>
            <person name="Cox E.C."/>
            <person name="Chisholm R.L."/>
            <person name="Gibbs R.A."/>
            <person name="Loomis W.F."/>
            <person name="Platzer M."/>
            <person name="Kay R.R."/>
            <person name="Williams J.G."/>
            <person name="Dear P.H."/>
            <person name="Noegel A.A."/>
            <person name="Barrell B.G."/>
            <person name="Kuspa A."/>
        </authorList>
    </citation>
    <scope>NUCLEOTIDE SEQUENCE [LARGE SCALE GENOMIC DNA]</scope>
    <source>
        <strain>AX4</strain>
    </source>
</reference>
<comment type="subcellular location">
    <subcellularLocation>
        <location evidence="2">Cell membrane</location>
        <topology evidence="2">Lipid-anchor</topology>
        <orientation evidence="2">Cytoplasmic side</orientation>
    </subcellularLocation>
</comment>
<comment type="similarity">
    <text evidence="2">Belongs to the small GTPase superfamily. Rab family.</text>
</comment>